<sequence>MNRRRGILFALASVLLVSVAQLSMRWSMTRLPRPDQWLSVPSVDSVALAVVLAAIFAYALSMLCWLAALRDLPLGRAYSLLSISYALVYLLAASLPLFNESFSFSKSLGVALVMLGVITINTRPARAPELRSSP</sequence>
<name>ARNF_PSEPF</name>
<evidence type="ECO:0000255" key="1">
    <source>
        <dbReference type="HAMAP-Rule" id="MF_00538"/>
    </source>
</evidence>
<reference key="1">
    <citation type="journal article" date="2009" name="Genome Biol.">
        <title>Genomic and genetic analyses of diversity and plant interactions of Pseudomonas fluorescens.</title>
        <authorList>
            <person name="Silby M.W."/>
            <person name="Cerdeno-Tarraga A.M."/>
            <person name="Vernikos G.S."/>
            <person name="Giddens S.R."/>
            <person name="Jackson R.W."/>
            <person name="Preston G.M."/>
            <person name="Zhang X.-X."/>
            <person name="Moon C.D."/>
            <person name="Gehrig S.M."/>
            <person name="Godfrey S.A.C."/>
            <person name="Knight C.G."/>
            <person name="Malone J.G."/>
            <person name="Robinson Z."/>
            <person name="Spiers A.J."/>
            <person name="Harris S."/>
            <person name="Challis G.L."/>
            <person name="Yaxley A.M."/>
            <person name="Harris D."/>
            <person name="Seeger K."/>
            <person name="Murphy L."/>
            <person name="Rutter S."/>
            <person name="Squares R."/>
            <person name="Quail M.A."/>
            <person name="Saunders E."/>
            <person name="Mavromatis K."/>
            <person name="Brettin T.S."/>
            <person name="Bentley S.D."/>
            <person name="Hothersall J."/>
            <person name="Stephens E."/>
            <person name="Thomas C.M."/>
            <person name="Parkhill J."/>
            <person name="Levy S.B."/>
            <person name="Rainey P.B."/>
            <person name="Thomson N.R."/>
        </authorList>
    </citation>
    <scope>NUCLEOTIDE SEQUENCE [LARGE SCALE GENOMIC DNA]</scope>
    <source>
        <strain>Pf0-1</strain>
    </source>
</reference>
<comment type="function">
    <text evidence="1">Translocates 4-amino-4-deoxy-L-arabinose-phosphoundecaprenol (alpha-L-Ara4N-phosphoundecaprenol) from the cytoplasmic to the periplasmic side of the inner membrane.</text>
</comment>
<comment type="pathway">
    <text evidence="1">Bacterial outer membrane biogenesis; lipopolysaccharide biosynthesis.</text>
</comment>
<comment type="subunit">
    <text evidence="1">Heterodimer of ArnE and ArnF.</text>
</comment>
<comment type="subcellular location">
    <subcellularLocation>
        <location evidence="1">Cell inner membrane</location>
        <topology evidence="1">Multi-pass membrane protein</topology>
    </subcellularLocation>
</comment>
<comment type="similarity">
    <text evidence="1">Belongs to the ArnF family.</text>
</comment>
<organism>
    <name type="scientific">Pseudomonas fluorescens (strain Pf0-1)</name>
    <dbReference type="NCBI Taxonomy" id="205922"/>
    <lineage>
        <taxon>Bacteria</taxon>
        <taxon>Pseudomonadati</taxon>
        <taxon>Pseudomonadota</taxon>
        <taxon>Gammaproteobacteria</taxon>
        <taxon>Pseudomonadales</taxon>
        <taxon>Pseudomonadaceae</taxon>
        <taxon>Pseudomonas</taxon>
    </lineage>
</organism>
<feature type="chain" id="PRO_0000382013" description="Probable 4-amino-4-deoxy-L-arabinose-phosphoundecaprenol flippase subunit ArnF">
    <location>
        <begin position="1"/>
        <end position="134"/>
    </location>
</feature>
<feature type="topological domain" description="Cytoplasmic" evidence="1">
    <location>
        <begin position="1"/>
        <end position="5"/>
    </location>
</feature>
<feature type="transmembrane region" description="Helical" evidence="1">
    <location>
        <begin position="6"/>
        <end position="26"/>
    </location>
</feature>
<feature type="topological domain" description="Periplasmic" evidence="1">
    <location>
        <begin position="27"/>
        <end position="45"/>
    </location>
</feature>
<feature type="transmembrane region" description="Helical" evidence="1">
    <location>
        <begin position="46"/>
        <end position="66"/>
    </location>
</feature>
<feature type="topological domain" description="Cytoplasmic" evidence="1">
    <location>
        <begin position="67"/>
        <end position="77"/>
    </location>
</feature>
<feature type="transmembrane region" description="Helical" evidence="1">
    <location>
        <begin position="78"/>
        <end position="98"/>
    </location>
</feature>
<feature type="topological domain" description="Periplasmic" evidence="1">
    <location>
        <begin position="99"/>
        <end position="101"/>
    </location>
</feature>
<feature type="transmembrane region" description="Helical" evidence="1">
    <location>
        <begin position="102"/>
        <end position="122"/>
    </location>
</feature>
<feature type="topological domain" description="Cytoplasmic" evidence="1">
    <location>
        <begin position="123"/>
        <end position="134"/>
    </location>
</feature>
<dbReference type="EMBL" id="CP000094">
    <property type="protein sequence ID" value="ABA74588.1"/>
    <property type="molecule type" value="Genomic_DNA"/>
</dbReference>
<dbReference type="RefSeq" id="WP_011334259.1">
    <property type="nucleotide sequence ID" value="NC_007492.2"/>
</dbReference>
<dbReference type="KEGG" id="pfo:Pfl01_2847"/>
<dbReference type="eggNOG" id="COG2076">
    <property type="taxonomic scope" value="Bacteria"/>
</dbReference>
<dbReference type="HOGENOM" id="CLU_131462_1_0_6"/>
<dbReference type="UniPathway" id="UPA00030"/>
<dbReference type="Proteomes" id="UP000002704">
    <property type="component" value="Chromosome"/>
</dbReference>
<dbReference type="GO" id="GO:0005886">
    <property type="term" value="C:plasma membrane"/>
    <property type="evidence" value="ECO:0007669"/>
    <property type="project" value="UniProtKB-SubCell"/>
</dbReference>
<dbReference type="GO" id="GO:1901505">
    <property type="term" value="F:carbohydrate derivative transmembrane transporter activity"/>
    <property type="evidence" value="ECO:0007669"/>
    <property type="project" value="InterPro"/>
</dbReference>
<dbReference type="GO" id="GO:0009245">
    <property type="term" value="P:lipid A biosynthetic process"/>
    <property type="evidence" value="ECO:0007669"/>
    <property type="project" value="UniProtKB-UniRule"/>
</dbReference>
<dbReference type="GO" id="GO:0009103">
    <property type="term" value="P:lipopolysaccharide biosynthetic process"/>
    <property type="evidence" value="ECO:0007669"/>
    <property type="project" value="UniProtKB-UniRule"/>
</dbReference>
<dbReference type="Gene3D" id="1.10.3730.20">
    <property type="match status" value="1"/>
</dbReference>
<dbReference type="HAMAP" id="MF_00538">
    <property type="entry name" value="Flippase_ArnF"/>
    <property type="match status" value="1"/>
</dbReference>
<dbReference type="InterPro" id="IPR022832">
    <property type="entry name" value="Flippase_ArnF"/>
</dbReference>
<dbReference type="InterPro" id="IPR000390">
    <property type="entry name" value="Small_drug/metabolite_transptr"/>
</dbReference>
<dbReference type="NCBIfam" id="NF002816">
    <property type="entry name" value="PRK02971.1-2"/>
    <property type="match status" value="1"/>
</dbReference>
<dbReference type="PANTHER" id="PTHR30561:SF9">
    <property type="entry name" value="4-AMINO-4-DEOXY-L-ARABINOSE-PHOSPHOUNDECAPRENOL FLIPPASE SUBUNIT ARNF-RELATED"/>
    <property type="match status" value="1"/>
</dbReference>
<dbReference type="PANTHER" id="PTHR30561">
    <property type="entry name" value="SMR FAMILY PROTON-DEPENDENT DRUG EFFLUX TRANSPORTER SUGE"/>
    <property type="match status" value="1"/>
</dbReference>
<dbReference type="SUPFAM" id="SSF103481">
    <property type="entry name" value="Multidrug resistance efflux transporter EmrE"/>
    <property type="match status" value="1"/>
</dbReference>
<protein>
    <recommendedName>
        <fullName evidence="1">Probable 4-amino-4-deoxy-L-arabinose-phosphoundecaprenol flippase subunit ArnF</fullName>
        <shortName evidence="1">L-Ara4N-phosphoundecaprenol flippase subunit ArnF</shortName>
    </recommendedName>
    <alternativeName>
        <fullName evidence="1">Undecaprenyl phosphate-aminoarabinose flippase subunit ArnF</fullName>
    </alternativeName>
</protein>
<accession>Q3KCB7</accession>
<proteinExistence type="inferred from homology"/>
<gene>
    <name evidence="1" type="primary">arnF</name>
    <name type="ordered locus">Pfl01_2847</name>
</gene>
<keyword id="KW-0997">Cell inner membrane</keyword>
<keyword id="KW-1003">Cell membrane</keyword>
<keyword id="KW-0441">Lipid A biosynthesis</keyword>
<keyword id="KW-0444">Lipid biosynthesis</keyword>
<keyword id="KW-0443">Lipid metabolism</keyword>
<keyword id="KW-0448">Lipopolysaccharide biosynthesis</keyword>
<keyword id="KW-0472">Membrane</keyword>
<keyword id="KW-0812">Transmembrane</keyword>
<keyword id="KW-1133">Transmembrane helix</keyword>
<keyword id="KW-0813">Transport</keyword>